<comment type="function">
    <text evidence="1">Binds 16S rRNA, required for the assembly of 30S particles and may also be responsible for determining the conformation of the 16S rRNA at the A site.</text>
</comment>
<comment type="subunit">
    <text evidence="1">Part of the 30S ribosomal subunit. Contacts proteins S3 and S10.</text>
</comment>
<comment type="similarity">
    <text evidence="1">Belongs to the universal ribosomal protein uS14 family.</text>
</comment>
<protein>
    <recommendedName>
        <fullName evidence="1">Small ribosomal subunit protein uS14A</fullName>
    </recommendedName>
    <alternativeName>
        <fullName evidence="2">30S ribosomal protein S14</fullName>
    </alternativeName>
</protein>
<name>RS14_LACLA</name>
<reference key="1">
    <citation type="journal article" date="2001" name="Genome Res.">
        <title>The complete genome sequence of the lactic acid bacterium Lactococcus lactis ssp. lactis IL1403.</title>
        <authorList>
            <person name="Bolotin A."/>
            <person name="Wincker P."/>
            <person name="Mauger S."/>
            <person name="Jaillon O."/>
            <person name="Malarme K."/>
            <person name="Weissenbach J."/>
            <person name="Ehrlich S.D."/>
            <person name="Sorokin A."/>
        </authorList>
    </citation>
    <scope>NUCLEOTIDE SEQUENCE [LARGE SCALE GENOMIC DNA]</scope>
    <source>
        <strain>IL1403</strain>
    </source>
</reference>
<dbReference type="EMBL" id="AE005176">
    <property type="protein sequence ID" value="AAK04986.1"/>
    <property type="molecule type" value="Genomic_DNA"/>
</dbReference>
<dbReference type="PIR" id="H86735">
    <property type="entry name" value="H86735"/>
</dbReference>
<dbReference type="RefSeq" id="NP_267044.1">
    <property type="nucleotide sequence ID" value="NC_002662.1"/>
</dbReference>
<dbReference type="RefSeq" id="WP_010905608.1">
    <property type="nucleotide sequence ID" value="NC_002662.1"/>
</dbReference>
<dbReference type="SMR" id="Q9CH51"/>
<dbReference type="PaxDb" id="272623-L110165"/>
<dbReference type="EnsemblBacteria" id="AAK04986">
    <property type="protein sequence ID" value="AAK04986"/>
    <property type="gene ID" value="L110165"/>
</dbReference>
<dbReference type="KEGG" id="lla:L110165"/>
<dbReference type="PATRIC" id="fig|272623.7.peg.951"/>
<dbReference type="eggNOG" id="COG0199">
    <property type="taxonomic scope" value="Bacteria"/>
</dbReference>
<dbReference type="HOGENOM" id="CLU_139869_0_0_9"/>
<dbReference type="OrthoDB" id="9810484at2"/>
<dbReference type="Proteomes" id="UP000002196">
    <property type="component" value="Chromosome"/>
</dbReference>
<dbReference type="GO" id="GO:0005737">
    <property type="term" value="C:cytoplasm"/>
    <property type="evidence" value="ECO:0007669"/>
    <property type="project" value="UniProtKB-ARBA"/>
</dbReference>
<dbReference type="GO" id="GO:0015935">
    <property type="term" value="C:small ribosomal subunit"/>
    <property type="evidence" value="ECO:0007669"/>
    <property type="project" value="TreeGrafter"/>
</dbReference>
<dbReference type="GO" id="GO:0019843">
    <property type="term" value="F:rRNA binding"/>
    <property type="evidence" value="ECO:0007669"/>
    <property type="project" value="UniProtKB-UniRule"/>
</dbReference>
<dbReference type="GO" id="GO:0003735">
    <property type="term" value="F:structural constituent of ribosome"/>
    <property type="evidence" value="ECO:0007669"/>
    <property type="project" value="InterPro"/>
</dbReference>
<dbReference type="GO" id="GO:0006412">
    <property type="term" value="P:translation"/>
    <property type="evidence" value="ECO:0007669"/>
    <property type="project" value="UniProtKB-UniRule"/>
</dbReference>
<dbReference type="Gene3D" id="4.10.830.10">
    <property type="entry name" value="30s Ribosomal Protein S14, Chain N"/>
    <property type="match status" value="1"/>
</dbReference>
<dbReference type="HAMAP" id="MF_00537">
    <property type="entry name" value="Ribosomal_uS14_1"/>
    <property type="match status" value="1"/>
</dbReference>
<dbReference type="InterPro" id="IPR001209">
    <property type="entry name" value="Ribosomal_uS14"/>
</dbReference>
<dbReference type="InterPro" id="IPR023036">
    <property type="entry name" value="Ribosomal_uS14_bac/plastid"/>
</dbReference>
<dbReference type="InterPro" id="IPR043140">
    <property type="entry name" value="Ribosomal_uS14_sf"/>
</dbReference>
<dbReference type="NCBIfam" id="NF006477">
    <property type="entry name" value="PRK08881.1"/>
    <property type="match status" value="1"/>
</dbReference>
<dbReference type="PANTHER" id="PTHR19836">
    <property type="entry name" value="30S RIBOSOMAL PROTEIN S14"/>
    <property type="match status" value="1"/>
</dbReference>
<dbReference type="PANTHER" id="PTHR19836:SF19">
    <property type="entry name" value="SMALL RIBOSOMAL SUBUNIT PROTEIN US14M"/>
    <property type="match status" value="1"/>
</dbReference>
<dbReference type="Pfam" id="PF00253">
    <property type="entry name" value="Ribosomal_S14"/>
    <property type="match status" value="1"/>
</dbReference>
<dbReference type="SUPFAM" id="SSF57716">
    <property type="entry name" value="Glucocorticoid receptor-like (DNA-binding domain)"/>
    <property type="match status" value="1"/>
</dbReference>
<keyword id="KW-1185">Reference proteome</keyword>
<keyword id="KW-0687">Ribonucleoprotein</keyword>
<keyword id="KW-0689">Ribosomal protein</keyword>
<keyword id="KW-0694">RNA-binding</keyword>
<keyword id="KW-0699">rRNA-binding</keyword>
<gene>
    <name evidence="1" type="primary">rpsN</name>
    <name type="synonym">rpsN2</name>
    <name type="ordered locus">LL0888</name>
    <name type="ORF">L110165</name>
</gene>
<organism>
    <name type="scientific">Lactococcus lactis subsp. lactis (strain IL1403)</name>
    <name type="common">Streptococcus lactis</name>
    <dbReference type="NCBI Taxonomy" id="272623"/>
    <lineage>
        <taxon>Bacteria</taxon>
        <taxon>Bacillati</taxon>
        <taxon>Bacillota</taxon>
        <taxon>Bacilli</taxon>
        <taxon>Lactobacillales</taxon>
        <taxon>Streptococcaceae</taxon>
        <taxon>Lactococcus</taxon>
    </lineage>
</organism>
<evidence type="ECO:0000255" key="1">
    <source>
        <dbReference type="HAMAP-Rule" id="MF_00537"/>
    </source>
</evidence>
<evidence type="ECO:0000305" key="2"/>
<accession>Q9CH51</accession>
<proteinExistence type="inferred from homology"/>
<sequence>MAKKSKIAKFKKQQKLVAQYQELRQELKKEKNYEALRKLPKDSHPNRMKMRDRIDGRPRAYMRKFGMSRVNFRKLAHEGKIPGVKKSSW</sequence>
<feature type="chain" id="PRO_0000130897" description="Small ribosomal subunit protein uS14A">
    <location>
        <begin position="1"/>
        <end position="89"/>
    </location>
</feature>